<gene>
    <name evidence="1" type="primary">cysS</name>
    <name type="ordered locus">Mfla_0500</name>
</gene>
<feature type="chain" id="PRO_0000332852" description="Cysteine--tRNA ligase">
    <location>
        <begin position="1"/>
        <end position="455"/>
    </location>
</feature>
<feature type="short sequence motif" description="'HIGH' region">
    <location>
        <begin position="30"/>
        <end position="40"/>
    </location>
</feature>
<feature type="short sequence motif" description="'KMSKS' region">
    <location>
        <begin position="266"/>
        <end position="270"/>
    </location>
</feature>
<feature type="binding site" evidence="1">
    <location>
        <position position="28"/>
    </location>
    <ligand>
        <name>Zn(2+)</name>
        <dbReference type="ChEBI" id="CHEBI:29105"/>
    </ligand>
</feature>
<feature type="binding site" evidence="1">
    <location>
        <position position="209"/>
    </location>
    <ligand>
        <name>Zn(2+)</name>
        <dbReference type="ChEBI" id="CHEBI:29105"/>
    </ligand>
</feature>
<feature type="binding site" evidence="1">
    <location>
        <position position="234"/>
    </location>
    <ligand>
        <name>Zn(2+)</name>
        <dbReference type="ChEBI" id="CHEBI:29105"/>
    </ligand>
</feature>
<feature type="binding site" evidence="1">
    <location>
        <position position="238"/>
    </location>
    <ligand>
        <name>Zn(2+)</name>
        <dbReference type="ChEBI" id="CHEBI:29105"/>
    </ligand>
</feature>
<feature type="binding site" evidence="1">
    <location>
        <position position="269"/>
    </location>
    <ligand>
        <name>ATP</name>
        <dbReference type="ChEBI" id="CHEBI:30616"/>
    </ligand>
</feature>
<dbReference type="EC" id="6.1.1.16" evidence="1"/>
<dbReference type="EMBL" id="CP000284">
    <property type="protein sequence ID" value="ABE48770.1"/>
    <property type="molecule type" value="Genomic_DNA"/>
</dbReference>
<dbReference type="RefSeq" id="WP_011478867.1">
    <property type="nucleotide sequence ID" value="NC_007947.1"/>
</dbReference>
<dbReference type="SMR" id="Q1H417"/>
<dbReference type="STRING" id="265072.Mfla_0500"/>
<dbReference type="KEGG" id="mfa:Mfla_0500"/>
<dbReference type="eggNOG" id="COG0215">
    <property type="taxonomic scope" value="Bacteria"/>
</dbReference>
<dbReference type="HOGENOM" id="CLU_013528_0_1_4"/>
<dbReference type="OrthoDB" id="9815130at2"/>
<dbReference type="Proteomes" id="UP000002440">
    <property type="component" value="Chromosome"/>
</dbReference>
<dbReference type="GO" id="GO:0005829">
    <property type="term" value="C:cytosol"/>
    <property type="evidence" value="ECO:0007669"/>
    <property type="project" value="TreeGrafter"/>
</dbReference>
<dbReference type="GO" id="GO:0005524">
    <property type="term" value="F:ATP binding"/>
    <property type="evidence" value="ECO:0007669"/>
    <property type="project" value="UniProtKB-UniRule"/>
</dbReference>
<dbReference type="GO" id="GO:0004817">
    <property type="term" value="F:cysteine-tRNA ligase activity"/>
    <property type="evidence" value="ECO:0007669"/>
    <property type="project" value="UniProtKB-UniRule"/>
</dbReference>
<dbReference type="GO" id="GO:0008270">
    <property type="term" value="F:zinc ion binding"/>
    <property type="evidence" value="ECO:0007669"/>
    <property type="project" value="UniProtKB-UniRule"/>
</dbReference>
<dbReference type="GO" id="GO:0006423">
    <property type="term" value="P:cysteinyl-tRNA aminoacylation"/>
    <property type="evidence" value="ECO:0007669"/>
    <property type="project" value="UniProtKB-UniRule"/>
</dbReference>
<dbReference type="CDD" id="cd07963">
    <property type="entry name" value="Anticodon_Ia_Cys"/>
    <property type="match status" value="1"/>
</dbReference>
<dbReference type="CDD" id="cd00672">
    <property type="entry name" value="CysRS_core"/>
    <property type="match status" value="1"/>
</dbReference>
<dbReference type="FunFam" id="3.40.50.620:FF:000009">
    <property type="entry name" value="Cysteine--tRNA ligase"/>
    <property type="match status" value="1"/>
</dbReference>
<dbReference type="Gene3D" id="1.20.120.1910">
    <property type="entry name" value="Cysteine-tRNA ligase, C-terminal anti-codon recognition domain"/>
    <property type="match status" value="1"/>
</dbReference>
<dbReference type="Gene3D" id="3.40.50.620">
    <property type="entry name" value="HUPs"/>
    <property type="match status" value="1"/>
</dbReference>
<dbReference type="HAMAP" id="MF_00041">
    <property type="entry name" value="Cys_tRNA_synth"/>
    <property type="match status" value="1"/>
</dbReference>
<dbReference type="InterPro" id="IPR015803">
    <property type="entry name" value="Cys-tRNA-ligase"/>
</dbReference>
<dbReference type="InterPro" id="IPR015273">
    <property type="entry name" value="Cys-tRNA-synt_Ia_DALR"/>
</dbReference>
<dbReference type="InterPro" id="IPR024909">
    <property type="entry name" value="Cys-tRNA/MSH_ligase"/>
</dbReference>
<dbReference type="InterPro" id="IPR056411">
    <property type="entry name" value="CysS_C"/>
</dbReference>
<dbReference type="InterPro" id="IPR014729">
    <property type="entry name" value="Rossmann-like_a/b/a_fold"/>
</dbReference>
<dbReference type="InterPro" id="IPR032678">
    <property type="entry name" value="tRNA-synt_1_cat_dom"/>
</dbReference>
<dbReference type="InterPro" id="IPR009080">
    <property type="entry name" value="tRNAsynth_Ia_anticodon-bd"/>
</dbReference>
<dbReference type="NCBIfam" id="TIGR00435">
    <property type="entry name" value="cysS"/>
    <property type="match status" value="1"/>
</dbReference>
<dbReference type="PANTHER" id="PTHR10890:SF3">
    <property type="entry name" value="CYSTEINE--TRNA LIGASE, CYTOPLASMIC"/>
    <property type="match status" value="1"/>
</dbReference>
<dbReference type="PANTHER" id="PTHR10890">
    <property type="entry name" value="CYSTEINYL-TRNA SYNTHETASE"/>
    <property type="match status" value="1"/>
</dbReference>
<dbReference type="Pfam" id="PF23493">
    <property type="entry name" value="CysS_C"/>
    <property type="match status" value="1"/>
</dbReference>
<dbReference type="Pfam" id="PF09190">
    <property type="entry name" value="DALR_2"/>
    <property type="match status" value="1"/>
</dbReference>
<dbReference type="Pfam" id="PF01406">
    <property type="entry name" value="tRNA-synt_1e"/>
    <property type="match status" value="1"/>
</dbReference>
<dbReference type="PRINTS" id="PR00983">
    <property type="entry name" value="TRNASYNTHCYS"/>
</dbReference>
<dbReference type="SMART" id="SM00840">
    <property type="entry name" value="DALR_2"/>
    <property type="match status" value="1"/>
</dbReference>
<dbReference type="SUPFAM" id="SSF47323">
    <property type="entry name" value="Anticodon-binding domain of a subclass of class I aminoacyl-tRNA synthetases"/>
    <property type="match status" value="1"/>
</dbReference>
<dbReference type="SUPFAM" id="SSF52374">
    <property type="entry name" value="Nucleotidylyl transferase"/>
    <property type="match status" value="1"/>
</dbReference>
<name>SYC_METFK</name>
<comment type="catalytic activity">
    <reaction evidence="1">
        <text>tRNA(Cys) + L-cysteine + ATP = L-cysteinyl-tRNA(Cys) + AMP + diphosphate</text>
        <dbReference type="Rhea" id="RHEA:17773"/>
        <dbReference type="Rhea" id="RHEA-COMP:9661"/>
        <dbReference type="Rhea" id="RHEA-COMP:9679"/>
        <dbReference type="ChEBI" id="CHEBI:30616"/>
        <dbReference type="ChEBI" id="CHEBI:33019"/>
        <dbReference type="ChEBI" id="CHEBI:35235"/>
        <dbReference type="ChEBI" id="CHEBI:78442"/>
        <dbReference type="ChEBI" id="CHEBI:78517"/>
        <dbReference type="ChEBI" id="CHEBI:456215"/>
        <dbReference type="EC" id="6.1.1.16"/>
    </reaction>
</comment>
<comment type="cofactor">
    <cofactor evidence="1">
        <name>Zn(2+)</name>
        <dbReference type="ChEBI" id="CHEBI:29105"/>
    </cofactor>
    <text evidence="1">Binds 1 zinc ion per subunit.</text>
</comment>
<comment type="subunit">
    <text evidence="1">Monomer.</text>
</comment>
<comment type="subcellular location">
    <subcellularLocation>
        <location evidence="1">Cytoplasm</location>
    </subcellularLocation>
</comment>
<comment type="similarity">
    <text evidence="1">Belongs to the class-I aminoacyl-tRNA synthetase family.</text>
</comment>
<evidence type="ECO:0000255" key="1">
    <source>
        <dbReference type="HAMAP-Rule" id="MF_00041"/>
    </source>
</evidence>
<protein>
    <recommendedName>
        <fullName evidence="1">Cysteine--tRNA ligase</fullName>
        <ecNumber evidence="1">6.1.1.16</ecNumber>
    </recommendedName>
    <alternativeName>
        <fullName evidence="1">Cysteinyl-tRNA synthetase</fullName>
        <shortName evidence="1">CysRS</shortName>
    </alternativeName>
</protein>
<sequence length="455" mass="51429">MLKIYNTLARAKQTFSPIIPGKVSMYVCGMTVYDYCHLGHARVMVVFDMVNRWLRSSGYEVTYVRNITDIDDKIIARANENGETINALTDRFIAAMNEDAARLGVWRPDLEPRATDYIHEMIAMIVALIEKHHAYAADNGDVYYAVSSFASYGKLSGKSLEDLRAGERVEVDAHKRDPMDFVLWKAAKPGEPSWDSPWGPGRPGWHIECSAMGARHLGPHFDIHGGGQDLQFPHHENEIAQSEGAHGCTFVNYWMHNGFIRVDDEKMSKSLGNFFTIREVLEKYDAEVVRFFILRAHYRSPLNYSSHHLDDAKQALTRLYNTLRGRELPQLDIDWRQPEAERFKQALDDDFNTPEAFAVLFELASEANRTGSAVQAALLKALAGQLGLLQRDPDEFLKGEAVAGLSPDEIERLIAERLAARKCKNFAEADRIRDALTAQGIILEDTPQGTSWRRS</sequence>
<accession>Q1H417</accession>
<reference key="1">
    <citation type="submission" date="2006-03" db="EMBL/GenBank/DDBJ databases">
        <title>Complete sequence of Methylobacillus flagellatus KT.</title>
        <authorList>
            <consortium name="US DOE Joint Genome Institute"/>
            <person name="Copeland A."/>
            <person name="Lucas S."/>
            <person name="Lapidus A."/>
            <person name="Barry K."/>
            <person name="Detter J.C."/>
            <person name="Glavina del Rio T."/>
            <person name="Hammon N."/>
            <person name="Israni S."/>
            <person name="Dalin E."/>
            <person name="Tice H."/>
            <person name="Pitluck S."/>
            <person name="Brettin T."/>
            <person name="Bruce D."/>
            <person name="Han C."/>
            <person name="Tapia R."/>
            <person name="Saunders E."/>
            <person name="Gilna P."/>
            <person name="Schmutz J."/>
            <person name="Larimer F."/>
            <person name="Land M."/>
            <person name="Kyrpides N."/>
            <person name="Anderson I."/>
            <person name="Richardson P."/>
        </authorList>
    </citation>
    <scope>NUCLEOTIDE SEQUENCE [LARGE SCALE GENOMIC DNA]</scope>
    <source>
        <strain>ATCC 51484 / DSM 6875 / VKM B-1610 / KT</strain>
    </source>
</reference>
<proteinExistence type="inferred from homology"/>
<keyword id="KW-0030">Aminoacyl-tRNA synthetase</keyword>
<keyword id="KW-0067">ATP-binding</keyword>
<keyword id="KW-0963">Cytoplasm</keyword>
<keyword id="KW-0436">Ligase</keyword>
<keyword id="KW-0479">Metal-binding</keyword>
<keyword id="KW-0547">Nucleotide-binding</keyword>
<keyword id="KW-0648">Protein biosynthesis</keyword>
<keyword id="KW-1185">Reference proteome</keyword>
<keyword id="KW-0862">Zinc</keyword>
<organism>
    <name type="scientific">Methylobacillus flagellatus (strain ATCC 51484 / DSM 6875 / VKM B-1610 / KT)</name>
    <dbReference type="NCBI Taxonomy" id="265072"/>
    <lineage>
        <taxon>Bacteria</taxon>
        <taxon>Pseudomonadati</taxon>
        <taxon>Pseudomonadota</taxon>
        <taxon>Betaproteobacteria</taxon>
        <taxon>Nitrosomonadales</taxon>
        <taxon>Methylophilaceae</taxon>
        <taxon>Methylobacillus</taxon>
    </lineage>
</organism>